<reference key="1">
    <citation type="journal article" date="2004" name="Nature">
        <title>Genome evolution in yeasts.</title>
        <authorList>
            <person name="Dujon B."/>
            <person name="Sherman D."/>
            <person name="Fischer G."/>
            <person name="Durrens P."/>
            <person name="Casaregola S."/>
            <person name="Lafontaine I."/>
            <person name="de Montigny J."/>
            <person name="Marck C."/>
            <person name="Neuveglise C."/>
            <person name="Talla E."/>
            <person name="Goffard N."/>
            <person name="Frangeul L."/>
            <person name="Aigle M."/>
            <person name="Anthouard V."/>
            <person name="Babour A."/>
            <person name="Barbe V."/>
            <person name="Barnay S."/>
            <person name="Blanchin S."/>
            <person name="Beckerich J.-M."/>
            <person name="Beyne E."/>
            <person name="Bleykasten C."/>
            <person name="Boisrame A."/>
            <person name="Boyer J."/>
            <person name="Cattolico L."/>
            <person name="Confanioleri F."/>
            <person name="de Daruvar A."/>
            <person name="Despons L."/>
            <person name="Fabre E."/>
            <person name="Fairhead C."/>
            <person name="Ferry-Dumazet H."/>
            <person name="Groppi A."/>
            <person name="Hantraye F."/>
            <person name="Hennequin C."/>
            <person name="Jauniaux N."/>
            <person name="Joyet P."/>
            <person name="Kachouri R."/>
            <person name="Kerrest A."/>
            <person name="Koszul R."/>
            <person name="Lemaire M."/>
            <person name="Lesur I."/>
            <person name="Ma L."/>
            <person name="Muller H."/>
            <person name="Nicaud J.-M."/>
            <person name="Nikolski M."/>
            <person name="Oztas S."/>
            <person name="Ozier-Kalogeropoulos O."/>
            <person name="Pellenz S."/>
            <person name="Potier S."/>
            <person name="Richard G.-F."/>
            <person name="Straub M.-L."/>
            <person name="Suleau A."/>
            <person name="Swennen D."/>
            <person name="Tekaia F."/>
            <person name="Wesolowski-Louvel M."/>
            <person name="Westhof E."/>
            <person name="Wirth B."/>
            <person name="Zeniou-Meyer M."/>
            <person name="Zivanovic Y."/>
            <person name="Bolotin-Fukuhara M."/>
            <person name="Thierry A."/>
            <person name="Bouchier C."/>
            <person name="Caudron B."/>
            <person name="Scarpelli C."/>
            <person name="Gaillardin C."/>
            <person name="Weissenbach J."/>
            <person name="Wincker P."/>
            <person name="Souciet J.-L."/>
        </authorList>
    </citation>
    <scope>NUCLEOTIDE SEQUENCE [LARGE SCALE GENOMIC DNA]</scope>
    <source>
        <strain>ATCC 2001 / BCRC 20586 / JCM 3761 / NBRC 0622 / NRRL Y-65 / CBS 138</strain>
    </source>
</reference>
<evidence type="ECO:0000250" key="1">
    <source>
        <dbReference type="UniProtKB" id="P53075"/>
    </source>
</evidence>
<evidence type="ECO:0000255" key="2"/>
<evidence type="ECO:0000256" key="3">
    <source>
        <dbReference type="SAM" id="MobiDB-lite"/>
    </source>
</evidence>
<evidence type="ECO:0000305" key="4"/>
<keyword id="KW-0175">Coiled coil</keyword>
<keyword id="KW-0496">Mitochondrion</keyword>
<keyword id="KW-1185">Reference proteome</keyword>
<keyword id="KW-0687">Ribonucleoprotein</keyword>
<keyword id="KW-0732">Signal</keyword>
<keyword id="KW-0749">Sporulation</keyword>
<protein>
    <recommendedName>
        <fullName evidence="1">Outer spore wall assembly protein SHE10</fullName>
    </recommendedName>
    <alternativeName>
        <fullName evidence="1">Sensitivity to high expression protein 10</fullName>
    </alternativeName>
</protein>
<gene>
    <name evidence="1" type="primary">SHE10</name>
    <name type="ordered locus">CAGL0I04092g</name>
</gene>
<sequence length="556" mass="64520">MRFLTKFLLFLATVYFGLKYACESPLRAQYPQLQLACHYSQPALWNDYLLKNSPAYKNSVHPQLVVAKGKYEELVQPHVKDVCKRVHTQLDRIDKKKYCDLAHSYANLAYQKAQFYYSISAGKYVHDFCKSDLYNKNLKRHVERAKEDLSKAYHLAVVRIPQLFTRENVEKFTSSASAYINEKTESLKKEAKQITSDVKKTVESEIKKRTTSSESEEEPIVSTSTIVKTITRTRHSSSSTTSTKSAEETSEKNLETKEEEDITDIEIDHQAQLQRDFDKWTSNIDKKVKMVNKMLVRDVKKHLKPKIDANDKLFKDKLKVLHKEANDNFQLINKAIQDINCTQGIDPETGKQIYFDSEGKSQIEKYITREMIRTMLNDTQTTLNSLVADIENDVSKILEDFKKIAENSREQHLTTFEEWGDIMINEWSKKLAYLDVLAPHEDAEHEGKSKTELSEKNWKKFMAIKKQILDARDKMAKRQIKISEFKLLLDNVQNTLQAVTNENGEYLYILRAQANLAFQERERLEKEAEEAKLRKEAGEVNESSEEEQIVEEPISA</sequence>
<accession>Q6FQR7</accession>
<name>SHE10_CANGA</name>
<dbReference type="EMBL" id="CR380955">
    <property type="protein sequence ID" value="CAG60364.1"/>
    <property type="molecule type" value="Genomic_DNA"/>
</dbReference>
<dbReference type="RefSeq" id="XP_447427.1">
    <property type="nucleotide sequence ID" value="XM_447427.1"/>
</dbReference>
<dbReference type="SMR" id="Q6FQR7"/>
<dbReference type="FunCoup" id="Q6FQR7">
    <property type="interactions" value="28"/>
</dbReference>
<dbReference type="STRING" id="284593.Q6FQR7"/>
<dbReference type="EnsemblFungi" id="CAGL0I04092g-T">
    <property type="protein sequence ID" value="CAGL0I04092g-T-p1"/>
    <property type="gene ID" value="CAGL0I04092g"/>
</dbReference>
<dbReference type="KEGG" id="cgr:2889099"/>
<dbReference type="CGD" id="CAL0132508">
    <property type="gene designation" value="CAGL0I04092g"/>
</dbReference>
<dbReference type="VEuPathDB" id="FungiDB:CAGL0I04092g"/>
<dbReference type="eggNOG" id="ENOG502QT2T">
    <property type="taxonomic scope" value="Eukaryota"/>
</dbReference>
<dbReference type="HOGENOM" id="CLU_023952_1_0_1"/>
<dbReference type="InParanoid" id="Q6FQR7"/>
<dbReference type="OMA" id="MINEWSK"/>
<dbReference type="Proteomes" id="UP000002428">
    <property type="component" value="Chromosome I"/>
</dbReference>
<dbReference type="GO" id="GO:0005739">
    <property type="term" value="C:mitochondrion"/>
    <property type="evidence" value="ECO:0007669"/>
    <property type="project" value="UniProtKB-SubCell"/>
</dbReference>
<dbReference type="GO" id="GO:1990904">
    <property type="term" value="C:ribonucleoprotein complex"/>
    <property type="evidence" value="ECO:0007669"/>
    <property type="project" value="UniProtKB-KW"/>
</dbReference>
<dbReference type="GO" id="GO:0030435">
    <property type="term" value="P:sporulation resulting in formation of a cellular spore"/>
    <property type="evidence" value="ECO:0007669"/>
    <property type="project" value="UniProtKB-KW"/>
</dbReference>
<organism>
    <name type="scientific">Candida glabrata (strain ATCC 2001 / BCRC 20586 / JCM 3761 / NBRC 0622 / NRRL Y-65 / CBS 138)</name>
    <name type="common">Yeast</name>
    <name type="synonym">Nakaseomyces glabratus</name>
    <dbReference type="NCBI Taxonomy" id="284593"/>
    <lineage>
        <taxon>Eukaryota</taxon>
        <taxon>Fungi</taxon>
        <taxon>Dikarya</taxon>
        <taxon>Ascomycota</taxon>
        <taxon>Saccharomycotina</taxon>
        <taxon>Saccharomycetes</taxon>
        <taxon>Saccharomycetales</taxon>
        <taxon>Saccharomycetaceae</taxon>
        <taxon>Nakaseomyces</taxon>
    </lineage>
</organism>
<comment type="function">
    <text evidence="1">Involved in spore wall assembly. May be a component of the mitochondrial RNase MRP (MtMRP), a ribonucleoprotein endoribonuclease involved in the cleaving RNA transcripts to generate primers for DNA replication in mitochondria.</text>
</comment>
<comment type="subunit">
    <text evidence="1">Component of the mitochondria-localized RNase mitochondrial RNA-processing (RNase MRP) composed of one single RNA encoded by the NME1 gene and at least 31 proteins. Absent in the nucleus-localized RNase MRP (NuMRP).</text>
</comment>
<comment type="subcellular location">
    <subcellularLocation>
        <location evidence="1">Mitochondrion</location>
    </subcellularLocation>
</comment>
<comment type="similarity">
    <text evidence="4">Belongs to the SHE10 family.</text>
</comment>
<proteinExistence type="inferred from homology"/>
<feature type="signal peptide" evidence="2">
    <location>
        <begin position="1"/>
        <end position="21"/>
    </location>
</feature>
<feature type="chain" id="PRO_0000408907" description="Outer spore wall assembly protein SHE10">
    <location>
        <begin position="22"/>
        <end position="556"/>
    </location>
</feature>
<feature type="region of interest" description="Disordered" evidence="3">
    <location>
        <begin position="190"/>
        <end position="263"/>
    </location>
</feature>
<feature type="region of interest" description="Disordered" evidence="3">
    <location>
        <begin position="534"/>
        <end position="556"/>
    </location>
</feature>
<feature type="coiled-coil region" evidence="2">
    <location>
        <begin position="135"/>
        <end position="201"/>
    </location>
</feature>
<feature type="coiled-coil region" evidence="2">
    <location>
        <begin position="481"/>
        <end position="547"/>
    </location>
</feature>
<feature type="compositionally biased region" description="Basic and acidic residues" evidence="3">
    <location>
        <begin position="190"/>
        <end position="208"/>
    </location>
</feature>
<feature type="compositionally biased region" description="Low complexity" evidence="3">
    <location>
        <begin position="220"/>
        <end position="244"/>
    </location>
</feature>
<feature type="compositionally biased region" description="Basic and acidic residues" evidence="3">
    <location>
        <begin position="245"/>
        <end position="256"/>
    </location>
</feature>